<feature type="chain" id="PRO_1000204686" description="Cell division topological specificity factor">
    <location>
        <begin position="1"/>
        <end position="99"/>
    </location>
</feature>
<organism>
    <name type="scientific">Tolumonas auensis (strain DSM 9187 / NBRC 110442 / TA 4)</name>
    <dbReference type="NCBI Taxonomy" id="595494"/>
    <lineage>
        <taxon>Bacteria</taxon>
        <taxon>Pseudomonadati</taxon>
        <taxon>Pseudomonadota</taxon>
        <taxon>Gammaproteobacteria</taxon>
        <taxon>Aeromonadales</taxon>
        <taxon>Aeromonadaceae</taxon>
        <taxon>Tolumonas</taxon>
    </lineage>
</organism>
<gene>
    <name evidence="1" type="primary">minE</name>
    <name type="ordered locus">Tola_1563</name>
</gene>
<name>MINE_TOLAT</name>
<keyword id="KW-0131">Cell cycle</keyword>
<keyword id="KW-0132">Cell division</keyword>
<keyword id="KW-1185">Reference proteome</keyword>
<evidence type="ECO:0000255" key="1">
    <source>
        <dbReference type="HAMAP-Rule" id="MF_00262"/>
    </source>
</evidence>
<protein>
    <recommendedName>
        <fullName evidence="1">Cell division topological specificity factor</fullName>
    </recommendedName>
</protein>
<proteinExistence type="inferred from homology"/>
<comment type="function">
    <text evidence="1">Prevents the cell division inhibition by proteins MinC and MinD at internal division sites while permitting inhibition at polar sites. This ensures cell division at the proper site by restricting the formation of a division septum at the midpoint of the long axis of the cell.</text>
</comment>
<comment type="similarity">
    <text evidence="1">Belongs to the MinE family.</text>
</comment>
<accession>C4LF07</accession>
<sequence length="99" mass="11413">MSLLDFFLKSRKENTAKLAKERLQIIVAHERTSRSGPDYLPQLKQDILDVIRKYVQIDPEQVTVQLDKKGEQLSVLELNIMLSDDKPQNADDNTEETKS</sequence>
<reference key="1">
    <citation type="submission" date="2009-05" db="EMBL/GenBank/DDBJ databases">
        <title>Complete sequence of Tolumonas auensis DSM 9187.</title>
        <authorList>
            <consortium name="US DOE Joint Genome Institute"/>
            <person name="Lucas S."/>
            <person name="Copeland A."/>
            <person name="Lapidus A."/>
            <person name="Glavina del Rio T."/>
            <person name="Tice H."/>
            <person name="Bruce D."/>
            <person name="Goodwin L."/>
            <person name="Pitluck S."/>
            <person name="Chertkov O."/>
            <person name="Brettin T."/>
            <person name="Detter J.C."/>
            <person name="Han C."/>
            <person name="Larimer F."/>
            <person name="Land M."/>
            <person name="Hauser L."/>
            <person name="Kyrpides N."/>
            <person name="Mikhailova N."/>
            <person name="Spring S."/>
            <person name="Beller H."/>
        </authorList>
    </citation>
    <scope>NUCLEOTIDE SEQUENCE [LARGE SCALE GENOMIC DNA]</scope>
    <source>
        <strain>DSM 9187 / NBRC 110442 / TA 4</strain>
    </source>
</reference>
<dbReference type="EMBL" id="CP001616">
    <property type="protein sequence ID" value="ACQ93174.1"/>
    <property type="molecule type" value="Genomic_DNA"/>
</dbReference>
<dbReference type="RefSeq" id="WP_015878645.1">
    <property type="nucleotide sequence ID" value="NC_012691.1"/>
</dbReference>
<dbReference type="SMR" id="C4LF07"/>
<dbReference type="STRING" id="595494.Tola_1563"/>
<dbReference type="KEGG" id="tau:Tola_1563"/>
<dbReference type="eggNOG" id="COG0851">
    <property type="taxonomic scope" value="Bacteria"/>
</dbReference>
<dbReference type="HOGENOM" id="CLU_137929_2_2_6"/>
<dbReference type="OrthoDB" id="9802655at2"/>
<dbReference type="Proteomes" id="UP000009073">
    <property type="component" value="Chromosome"/>
</dbReference>
<dbReference type="GO" id="GO:0051301">
    <property type="term" value="P:cell division"/>
    <property type="evidence" value="ECO:0007669"/>
    <property type="project" value="UniProtKB-KW"/>
</dbReference>
<dbReference type="GO" id="GO:0032955">
    <property type="term" value="P:regulation of division septum assembly"/>
    <property type="evidence" value="ECO:0007669"/>
    <property type="project" value="InterPro"/>
</dbReference>
<dbReference type="FunFam" id="3.30.1070.10:FF:000001">
    <property type="entry name" value="Cell division topological specificity factor"/>
    <property type="match status" value="1"/>
</dbReference>
<dbReference type="Gene3D" id="3.30.1070.10">
    <property type="entry name" value="Cell division topological specificity factor MinE"/>
    <property type="match status" value="1"/>
</dbReference>
<dbReference type="HAMAP" id="MF_00262">
    <property type="entry name" value="MinE"/>
    <property type="match status" value="1"/>
</dbReference>
<dbReference type="InterPro" id="IPR005527">
    <property type="entry name" value="MinE"/>
</dbReference>
<dbReference type="InterPro" id="IPR036707">
    <property type="entry name" value="MinE_sf"/>
</dbReference>
<dbReference type="NCBIfam" id="TIGR01215">
    <property type="entry name" value="minE"/>
    <property type="match status" value="1"/>
</dbReference>
<dbReference type="NCBIfam" id="NF001422">
    <property type="entry name" value="PRK00296.1"/>
    <property type="match status" value="1"/>
</dbReference>
<dbReference type="Pfam" id="PF03776">
    <property type="entry name" value="MinE"/>
    <property type="match status" value="1"/>
</dbReference>
<dbReference type="SUPFAM" id="SSF55229">
    <property type="entry name" value="Cell division protein MinE topological specificity domain"/>
    <property type="match status" value="1"/>
</dbReference>